<gene>
    <name evidence="9 13" type="primary">ets-4</name>
    <name evidence="13" type="ORF">F22A3.1</name>
</gene>
<protein>
    <recommendedName>
        <fullName evidence="9">Transcription factor ets-4</fullName>
    </recommendedName>
</protein>
<comment type="function">
    <text evidence="4 5 6 7 8">Transcription factor which binds to 5'-GGAA/T-3' DNA consensus sequences (PubMed:20862312, PubMed:26484536). Both positively and negatively regulates the expression of target genes (PubMed:20862312). Plays a role in the regulation of adult lifespan, which may in part be through modulation of daf-16 activity (PubMed:20862312, PubMed:37556491). Regulates the expression of genes such as svh-2 in response to axon injury and in addition, may function downstream of the cAMP signaling pathway to promote axon regeneration (PubMed:26484536, PubMed:31393064). Regulates the expression of lipid metabolism genes and may also control the expression of the RNA-binding protein rege-1 which too has been implicated in the control of fat accumulation (PubMed:27746047, PubMed:37556491).</text>
</comment>
<comment type="subunit">
    <text evidence="5 7">May interact with cebp-1 (PubMed:26484536). May interact with tdpt-1 to facilitate its sumoylation (PubMed:31393064).</text>
</comment>
<comment type="subcellular location">
    <subcellularLocation>
        <location evidence="4">Nucleus</location>
    </subcellularLocation>
</comment>
<comment type="alternative products">
    <event type="alternative splicing"/>
    <isoform>
        <id>A8WFJ9-1</id>
        <name evidence="13">b</name>
        <sequence type="displayed"/>
    </isoform>
    <isoform>
        <id>A8WFJ9-2</id>
        <name evidence="12">a</name>
        <sequence type="described" ref="VSP_058757 VSP_058758"/>
    </isoform>
</comment>
<comment type="tissue specificity">
    <text evidence="4">Expressed in cells of the anterior and posterior bulbs of the pharynx, seam cells, a few unidentified cells of the vulva, the hypodermis, several unidentified neurons, labial socket cells of the head and rectal cells.</text>
</comment>
<comment type="developmental stage">
    <text evidence="4">Expressed in intestinal cells from the 3-fold stage of embryogenesis to adulthood.</text>
</comment>
<comment type="domain">
    <text evidence="4">The N-terminal part (1-345) is responsible for activating transcription, but this action may be modulated by the PNT domain which acts to repress transcription.</text>
</comment>
<comment type="PTM">
    <text evidence="5">Phosphorylation is required for axon regeneration.</text>
</comment>
<comment type="PTM">
    <text evidence="7">Sumoylated; sumoylation inhibits phosphorylation, which is required for probable interaction with cebp-1 and consequently the expression of svh-2.</text>
</comment>
<comment type="disruption phenotype">
    <text evidence="4 5 6 8">Delayed larval development and increased lifespan, but overall resulting animals have normal morphology and fecundity (PubMed:20862312). Reduced egg-laying rate, but older hermaphrodites produce more progeny (PubMed:20862312). Both decreased expression of genes, such as the lipoprotein vit-5, which is related to life span regulation, and increased expression of genes such as lys-7, which is a lysosomal protein (PubMed:20862312). Reduced expression of genes such as svh-2 in response to axon injury and as a result, there is reduced axon regeneration of D-type motor neurons (PubMed:26484536). Exhibits extended lifespan when feeding on E.coli strain OP50, but feeding on P.aeruginosa strain PA14 has no effect on survival (PubMed:37556491). RNAi-mediated knockdown results in reduced expression of the RNA-binding protein rege-1 (PubMed:27746047).</text>
</comment>
<comment type="similarity">
    <text evidence="10">Belongs to the ETS family.</text>
</comment>
<keyword id="KW-0010">Activator</keyword>
<keyword id="KW-0025">Alternative splicing</keyword>
<keyword id="KW-0238">DNA-binding</keyword>
<keyword id="KW-1017">Isopeptide bond</keyword>
<keyword id="KW-0539">Nucleus</keyword>
<keyword id="KW-0597">Phosphoprotein</keyword>
<keyword id="KW-1185">Reference proteome</keyword>
<keyword id="KW-0678">Repressor</keyword>
<keyword id="KW-0804">Transcription</keyword>
<keyword id="KW-0805">Transcription regulation</keyword>
<keyword id="KW-0832">Ubl conjugation</keyword>
<accession>A8WFJ9</accession>
<accession>H2KYS4</accession>
<dbReference type="EMBL" id="BX284606">
    <property type="protein sequence ID" value="CCD64581.1"/>
    <property type="molecule type" value="Genomic_DNA"/>
</dbReference>
<dbReference type="EMBL" id="BX284606">
    <property type="protein sequence ID" value="CCD64575.1"/>
    <property type="molecule type" value="Genomic_DNA"/>
</dbReference>
<dbReference type="RefSeq" id="NP_001123137.1">
    <property type="nucleotide sequence ID" value="NM_001129665.2"/>
</dbReference>
<dbReference type="RefSeq" id="NP_509099.2">
    <molecule id="A8WFJ9-2"/>
    <property type="nucleotide sequence ID" value="NM_076698.6"/>
</dbReference>
<dbReference type="SMR" id="A8WFJ9"/>
<dbReference type="FunCoup" id="A8WFJ9">
    <property type="interactions" value="135"/>
</dbReference>
<dbReference type="IntAct" id="A8WFJ9">
    <property type="interactions" value="1"/>
</dbReference>
<dbReference type="STRING" id="6239.F22A3.1b.1"/>
<dbReference type="iPTMnet" id="A8WFJ9"/>
<dbReference type="PaxDb" id="6239-F22A3.1b"/>
<dbReference type="EnsemblMetazoa" id="F22A3.1a.1">
    <molecule id="A8WFJ9-2"/>
    <property type="protein sequence ID" value="F22A3.1a.1"/>
    <property type="gene ID" value="WBGene00017687"/>
</dbReference>
<dbReference type="EnsemblMetazoa" id="F22A3.1b.1">
    <property type="protein sequence ID" value="F22A3.1b.1"/>
    <property type="gene ID" value="WBGene00017687"/>
</dbReference>
<dbReference type="GeneID" id="180927"/>
<dbReference type="KEGG" id="cel:CELE_F22A3.1"/>
<dbReference type="UCSC" id="F22A3.1b">
    <molecule id="A8WFJ9-1"/>
    <property type="organism name" value="c. elegans"/>
</dbReference>
<dbReference type="AGR" id="WB:WBGene00017687"/>
<dbReference type="CTD" id="180927"/>
<dbReference type="WormBase" id="F22A3.1a">
    <molecule id="A8WFJ9-2"/>
    <property type="protein sequence ID" value="CE34001"/>
    <property type="gene ID" value="WBGene00017687"/>
    <property type="gene designation" value="ets-4"/>
</dbReference>
<dbReference type="WormBase" id="F22A3.1b">
    <molecule id="A8WFJ9-1"/>
    <property type="protein sequence ID" value="CE41797"/>
    <property type="gene ID" value="WBGene00017687"/>
    <property type="gene designation" value="ets-4"/>
</dbReference>
<dbReference type="eggNOG" id="KOG3805">
    <property type="taxonomic scope" value="Eukaryota"/>
</dbReference>
<dbReference type="GeneTree" id="ENSGT00940000157549"/>
<dbReference type="HOGENOM" id="CLU_736166_0_0_1"/>
<dbReference type="InParanoid" id="A8WFJ9"/>
<dbReference type="OMA" id="ARWINEM"/>
<dbReference type="OrthoDB" id="5961210at2759"/>
<dbReference type="PhylomeDB" id="A8WFJ9"/>
<dbReference type="SignaLink" id="A8WFJ9"/>
<dbReference type="PRO" id="PR:A8WFJ9"/>
<dbReference type="Proteomes" id="UP000001940">
    <property type="component" value="Chromosome X"/>
</dbReference>
<dbReference type="Bgee" id="WBGene00017687">
    <property type="expression patterns" value="Expressed in pharyngeal muscle cell (C elegans) and 4 other cell types or tissues"/>
</dbReference>
<dbReference type="GO" id="GO:0005634">
    <property type="term" value="C:nucleus"/>
    <property type="evidence" value="ECO:0000314"/>
    <property type="project" value="WormBase"/>
</dbReference>
<dbReference type="GO" id="GO:0090575">
    <property type="term" value="C:RNA polymerase II transcription regulator complex"/>
    <property type="evidence" value="ECO:0000314"/>
    <property type="project" value="UniProtKB"/>
</dbReference>
<dbReference type="GO" id="GO:0000981">
    <property type="term" value="F:DNA-binding transcription factor activity, RNA polymerase II-specific"/>
    <property type="evidence" value="ECO:0000315"/>
    <property type="project" value="UniProtKB"/>
</dbReference>
<dbReference type="GO" id="GO:0140297">
    <property type="term" value="F:DNA-binding transcription factor binding"/>
    <property type="evidence" value="ECO:0000353"/>
    <property type="project" value="UniProtKB"/>
</dbReference>
<dbReference type="GO" id="GO:0000978">
    <property type="term" value="F:RNA polymerase II cis-regulatory region sequence-specific DNA binding"/>
    <property type="evidence" value="ECO:0000315"/>
    <property type="project" value="UniProtKB"/>
</dbReference>
<dbReference type="GO" id="GO:0030154">
    <property type="term" value="P:cell differentiation"/>
    <property type="evidence" value="ECO:0000318"/>
    <property type="project" value="GO_Central"/>
</dbReference>
<dbReference type="GO" id="GO:0048691">
    <property type="term" value="P:positive regulation of axon extension involved in regeneration"/>
    <property type="evidence" value="ECO:0000315"/>
    <property type="project" value="UniProtKB"/>
</dbReference>
<dbReference type="GO" id="GO:0045944">
    <property type="term" value="P:positive regulation of transcription by RNA polymerase II"/>
    <property type="evidence" value="ECO:0000315"/>
    <property type="project" value="UniProtKB"/>
</dbReference>
<dbReference type="GO" id="GO:0006357">
    <property type="term" value="P:regulation of transcription by RNA polymerase II"/>
    <property type="evidence" value="ECO:0000318"/>
    <property type="project" value="GO_Central"/>
</dbReference>
<dbReference type="FunFam" id="1.10.10.10:FF:001129">
    <property type="entry name" value="Transcription factor ets-4"/>
    <property type="match status" value="1"/>
</dbReference>
<dbReference type="Gene3D" id="1.10.150.50">
    <property type="entry name" value="Transcription Factor, Ets-1"/>
    <property type="match status" value="1"/>
</dbReference>
<dbReference type="Gene3D" id="1.10.10.10">
    <property type="entry name" value="Winged helix-like DNA-binding domain superfamily/Winged helix DNA-binding domain"/>
    <property type="match status" value="1"/>
</dbReference>
<dbReference type="InterPro" id="IPR000418">
    <property type="entry name" value="Ets_dom"/>
</dbReference>
<dbReference type="InterPro" id="IPR046328">
    <property type="entry name" value="ETS_fam"/>
</dbReference>
<dbReference type="InterPro" id="IPR003118">
    <property type="entry name" value="Pointed_dom"/>
</dbReference>
<dbReference type="InterPro" id="IPR013761">
    <property type="entry name" value="SAM/pointed_sf"/>
</dbReference>
<dbReference type="InterPro" id="IPR036388">
    <property type="entry name" value="WH-like_DNA-bd_sf"/>
</dbReference>
<dbReference type="InterPro" id="IPR036390">
    <property type="entry name" value="WH_DNA-bd_sf"/>
</dbReference>
<dbReference type="PANTHER" id="PTHR11849">
    <property type="entry name" value="ETS"/>
    <property type="match status" value="1"/>
</dbReference>
<dbReference type="PANTHER" id="PTHR11849:SF182">
    <property type="entry name" value="SAM POINTED DOMAIN-CONTAINING ETS TRANSCRIPTION FACTOR"/>
    <property type="match status" value="1"/>
</dbReference>
<dbReference type="Pfam" id="PF00178">
    <property type="entry name" value="Ets"/>
    <property type="match status" value="1"/>
</dbReference>
<dbReference type="Pfam" id="PF02198">
    <property type="entry name" value="SAM_PNT"/>
    <property type="match status" value="1"/>
</dbReference>
<dbReference type="PRINTS" id="PR00454">
    <property type="entry name" value="ETSDOMAIN"/>
</dbReference>
<dbReference type="SMART" id="SM00413">
    <property type="entry name" value="ETS"/>
    <property type="match status" value="1"/>
</dbReference>
<dbReference type="SMART" id="SM00251">
    <property type="entry name" value="SAM_PNT"/>
    <property type="match status" value="1"/>
</dbReference>
<dbReference type="SUPFAM" id="SSF47769">
    <property type="entry name" value="SAM/Pointed domain"/>
    <property type="match status" value="1"/>
</dbReference>
<dbReference type="SUPFAM" id="SSF46785">
    <property type="entry name" value="Winged helix' DNA-binding domain"/>
    <property type="match status" value="1"/>
</dbReference>
<dbReference type="PROSITE" id="PS00346">
    <property type="entry name" value="ETS_DOMAIN_2"/>
    <property type="match status" value="1"/>
</dbReference>
<dbReference type="PROSITE" id="PS50061">
    <property type="entry name" value="ETS_DOMAIN_3"/>
    <property type="match status" value="1"/>
</dbReference>
<dbReference type="PROSITE" id="PS51433">
    <property type="entry name" value="PNT"/>
    <property type="match status" value="1"/>
</dbReference>
<proteinExistence type="evidence at protein level"/>
<name>ETS4_CAEEL</name>
<reference evidence="11" key="1">
    <citation type="journal article" date="1998" name="Science">
        <title>Genome sequence of the nematode C. elegans: a platform for investigating biology.</title>
        <authorList>
            <consortium name="The C. elegans sequencing consortium"/>
        </authorList>
    </citation>
    <scope>NUCLEOTIDE SEQUENCE [LARGE SCALE GENOMIC DNA]</scope>
    <source>
        <strain evidence="11">Bristol N2</strain>
    </source>
</reference>
<reference evidence="10" key="2">
    <citation type="journal article" date="2010" name="PLoS Genet.">
        <title>ETS-4 is a transcriptional regulator of life span in Caenorhabditis elegans.</title>
        <authorList>
            <person name="Thyagarajan B."/>
            <person name="Blaszczak A.G."/>
            <person name="Chandler K.J."/>
            <person name="Watts J.L."/>
            <person name="Johnson W.E."/>
            <person name="Graves B.J."/>
        </authorList>
    </citation>
    <scope>FUNCTION</scope>
    <scope>SUBCELLULAR LOCATION</scope>
    <scope>TISSUE SPECIFICITY</scope>
    <scope>DEVELOPMENTAL STAGE</scope>
    <scope>DOMAIN</scope>
    <scope>DISRUPTION PHENOTYPE</scope>
</reference>
<reference evidence="10" key="3">
    <citation type="journal article" date="2015" name="PLoS Genet.">
        <title>Axon regeneration is regulated by Ets-C/EBP transcription complexes generated by activation of the cAMP/Ca2+ signaling pathways.</title>
        <authorList>
            <person name="Li C."/>
            <person name="Hisamoto N."/>
            <person name="Matsumoto K."/>
        </authorList>
    </citation>
    <scope>FUNCTION</scope>
    <scope>INTERACTION WITH CEBP-1</scope>
    <scope>PHOSPHORYLATION AT SER-73</scope>
    <scope>DISRUPTION PHENOTYPE</scope>
    <scope>MUTAGENESIS OF SER-73</scope>
</reference>
<reference evidence="10" key="4">
    <citation type="journal article" date="2016" name="Dev. Cell">
        <title>Ribonuclease-mediated control of body fat.</title>
        <authorList>
            <person name="Habacher C."/>
            <person name="Guo Y."/>
            <person name="Venz R."/>
            <person name="Kumari P."/>
            <person name="Neagu A."/>
            <person name="Gaidatzis D."/>
            <person name="Harvald E.B."/>
            <person name="Faergeman N.J."/>
            <person name="Gut H."/>
            <person name="Ciosk R."/>
        </authorList>
    </citation>
    <scope>FUNCTION</scope>
    <scope>DISRUPTION PHENOTYPE</scope>
</reference>
<reference evidence="10" key="5">
    <citation type="journal article" date="2019" name="EMBO Rep.">
        <title>TDP2 negatively regulates axon regeneration by inducing SUMOylation of an Ets transcription factor.</title>
        <authorList>
            <person name="Sakai Y."/>
            <person name="Hanafusa H."/>
            <person name="Pastuhov S.I."/>
            <person name="Shimizu T."/>
            <person name="Li C."/>
            <person name="Hisamoto N."/>
            <person name="Matsumoto K."/>
        </authorList>
    </citation>
    <scope>FUNCTION</scope>
    <scope>INTERACTION WITH TDPT-1</scope>
    <scope>PHOSPHORYLATION AT SER-73</scope>
    <scope>SUMOYLATION AT LYS-32 AND LYS-83</scope>
    <scope>MUTAGENESIS OF LYS-32; SER-73 AND LYS-83</scope>
</reference>
<reference evidence="10" key="6">
    <citation type="journal article" date="2023" name="PLoS Genet.">
        <title>Rege-1 promotes C. elegans survival by modulating IIS and TOR pathways.</title>
        <authorList>
            <person name="Tsai Y.T."/>
            <person name="Chang C.H."/>
            <person name="Tsai H.Y."/>
        </authorList>
    </citation>
    <scope>FUNCTION</scope>
    <scope>DISRUPTION PHENOTYPE</scope>
</reference>
<feature type="chain" id="PRO_0000438864" description="Transcription factor ets-4" evidence="10">
    <location>
        <begin position="1"/>
        <end position="437"/>
    </location>
</feature>
<feature type="domain" description="PNT" evidence="2">
    <location>
        <begin position="120"/>
        <end position="202"/>
    </location>
</feature>
<feature type="DNA-binding region" description="ETS" evidence="1">
    <location>
        <begin position="349"/>
        <end position="432"/>
    </location>
</feature>
<feature type="region of interest" description="Disordered" evidence="3">
    <location>
        <begin position="1"/>
        <end position="30"/>
    </location>
</feature>
<feature type="region of interest" description="Disordered" evidence="3">
    <location>
        <begin position="275"/>
        <end position="302"/>
    </location>
</feature>
<feature type="compositionally biased region" description="Polar residues" evidence="3">
    <location>
        <begin position="21"/>
        <end position="30"/>
    </location>
</feature>
<feature type="compositionally biased region" description="Low complexity" evidence="3">
    <location>
        <begin position="280"/>
        <end position="293"/>
    </location>
</feature>
<feature type="modified residue" description="Phosphoserine" evidence="5">
    <location>
        <position position="73"/>
    </location>
</feature>
<feature type="cross-link" description="Glycyl lysine isopeptide (Lys-Gly) (interchain with G-Cter in SUMO)" evidence="7">
    <location>
        <position position="32"/>
    </location>
</feature>
<feature type="cross-link" description="Glycyl lysine isopeptide (Lys-Gly) (interchain with G-Cter in SUMO)" evidence="7">
    <location>
        <position position="83"/>
    </location>
</feature>
<feature type="splice variant" id="VSP_058757" description="In isoform a." evidence="10">
    <location>
        <begin position="1"/>
        <end position="54"/>
    </location>
</feature>
<feature type="splice variant" id="VSP_058758" description="In isoform a." evidence="10">
    <location>
        <begin position="201"/>
        <end position="207"/>
    </location>
</feature>
<feature type="mutagenesis site" description="Abolishes sumoylation. Suppresses axon regeneration defect in mxl-1 mutant background; when associated with only A-83, but not with A-73 and A-83." evidence="7">
    <original>K</original>
    <variation>A</variation>
    <location>
        <position position="32"/>
    </location>
</feature>
<feature type="mutagenesis site" description="Abolishes phosphorylation." evidence="5 7">
    <original>S</original>
    <variation>A</variation>
    <location>
        <position position="73"/>
    </location>
</feature>
<feature type="mutagenesis site" description="Phosphomimetic mutant which may allow for association with cebp-1. Suppresses axon regeneration defect in mxl-1 background mutant but the suppression is abolished; when associated with A-32 and A-83." evidence="5 7">
    <original>S</original>
    <variation>E</variation>
    <location>
        <position position="73"/>
    </location>
</feature>
<feature type="mutagenesis site" description="Abolishes sumoylation. Suppresses axon regeneration defect in mxl-1 mutant background; when associated with only A-32, but not with A-32 and A-73." evidence="7">
    <original>K</original>
    <variation>A</variation>
    <location>
        <position position="83"/>
    </location>
</feature>
<organism evidence="11">
    <name type="scientific">Caenorhabditis elegans</name>
    <dbReference type="NCBI Taxonomy" id="6239"/>
    <lineage>
        <taxon>Eukaryota</taxon>
        <taxon>Metazoa</taxon>
        <taxon>Ecdysozoa</taxon>
        <taxon>Nematoda</taxon>
        <taxon>Chromadorea</taxon>
        <taxon>Rhabditida</taxon>
        <taxon>Rhabditina</taxon>
        <taxon>Rhabditomorpha</taxon>
        <taxon>Rhabditoidea</taxon>
        <taxon>Rhabditidae</taxon>
        <taxon>Peloderinae</taxon>
        <taxon>Caenorhabditis</taxon>
    </lineage>
</organism>
<sequence>MNGTGSVGHRWNSLSPEPHSGTESTASTPFVKSEFPFDDDLFGIDQVNNVKPHPMDMPCNLPIQPIEYNRRFSKDADHSTFVKNEIEENILNFNVNPEIAQDNGLDTQQIDIYRDLILRHLIQDISTTCAKLGLPNDFYLWSSEHGARWINEMCMQFNLQPPRNCSITGIDLLGMSQKDFEMILPAGGDTLHAQLQVWKTGTSDYVKAFENYHPPVTVQSSGMTAAENNMQSKTNWLASTNNQTNNMAAAENPNHPFFNGNGGYPNMSMSSFFQQGTVLPSPSNSDTSSNGSSQDMNDDDIDLHMNNSNCGFSNFFHNQGYMNSPIDAMCNGSEGDDDERAYTRHQGTVHLWQFIRELLDQPKQYSACVRWVDRDEGTFKIESSLLLARYWGQRKNRSQMNYDKLSRSLRQYYKKGIIQKPEKKQRLVYKFLPPYNL</sequence>
<evidence type="ECO:0000255" key="1">
    <source>
        <dbReference type="PROSITE-ProRule" id="PRU00237"/>
    </source>
</evidence>
<evidence type="ECO:0000255" key="2">
    <source>
        <dbReference type="PROSITE-ProRule" id="PRU00762"/>
    </source>
</evidence>
<evidence type="ECO:0000256" key="3">
    <source>
        <dbReference type="SAM" id="MobiDB-lite"/>
    </source>
</evidence>
<evidence type="ECO:0000269" key="4">
    <source>
    </source>
</evidence>
<evidence type="ECO:0000269" key="5">
    <source>
    </source>
</evidence>
<evidence type="ECO:0000269" key="6">
    <source>
    </source>
</evidence>
<evidence type="ECO:0000269" key="7">
    <source>
    </source>
</evidence>
<evidence type="ECO:0000269" key="8">
    <source>
    </source>
</evidence>
<evidence type="ECO:0000303" key="9">
    <source>
    </source>
</evidence>
<evidence type="ECO:0000305" key="10"/>
<evidence type="ECO:0000312" key="11">
    <source>
        <dbReference type="Proteomes" id="UP000001940"/>
    </source>
</evidence>
<evidence type="ECO:0000312" key="12">
    <source>
        <dbReference type="WormBase" id="F22A3.1a"/>
    </source>
</evidence>
<evidence type="ECO:0000312" key="13">
    <source>
        <dbReference type="WormBase" id="F22A3.1b"/>
    </source>
</evidence>